<evidence type="ECO:0000255" key="1">
    <source>
        <dbReference type="HAMAP-Rule" id="MF_00591"/>
    </source>
</evidence>
<organism>
    <name type="scientific">Aeropyrum pernix (strain ATCC 700893 / DSM 11879 / JCM 9820 / NBRC 100138 / K1)</name>
    <dbReference type="NCBI Taxonomy" id="272557"/>
    <lineage>
        <taxon>Archaea</taxon>
        <taxon>Thermoproteota</taxon>
        <taxon>Thermoprotei</taxon>
        <taxon>Desulfurococcales</taxon>
        <taxon>Desulfurococcaceae</taxon>
        <taxon>Aeropyrum</taxon>
    </lineage>
</organism>
<sequence length="246" mass="26671">MAGPAQAGVELIRDGRRHDGRLPEDLRPVRMQVGILHNADGSALVEFGRTRVLAAVYGPREPHQRFYVLPDRAALRVRYHMAPFSTDERKSPAPSRREIELSKVVREALEPVVLAEEFPRTVIDVFLEVLQADGGTRTAAVTAASLALADAGIPMRALVGGVAVGKIQGVLVVDVDELEDMYGEADMPVAAAPDIGEITLLQLNGVLTGEEFRTALAMALRAIDRVVEMEKEAIRKSYLEVGGGQE</sequence>
<accession>Q9YC03</accession>
<name>RRP41_AERPE</name>
<gene>
    <name evidence="1" type="primary">rrp41</name>
    <name type="ordered locus">APE_1447</name>
</gene>
<protein>
    <recommendedName>
        <fullName evidence="1">Exosome complex component Rrp41</fullName>
        <ecNumber evidence="1">3.1.13.-</ecNumber>
    </recommendedName>
</protein>
<keyword id="KW-0963">Cytoplasm</keyword>
<keyword id="KW-0269">Exonuclease</keyword>
<keyword id="KW-0271">Exosome</keyword>
<keyword id="KW-0378">Hydrolase</keyword>
<keyword id="KW-0540">Nuclease</keyword>
<keyword id="KW-1185">Reference proteome</keyword>
<dbReference type="EC" id="3.1.13.-" evidence="1"/>
<dbReference type="EMBL" id="BA000002">
    <property type="protein sequence ID" value="BAA80445.1"/>
    <property type="molecule type" value="Genomic_DNA"/>
</dbReference>
<dbReference type="PIR" id="G72623">
    <property type="entry name" value="G72623"/>
</dbReference>
<dbReference type="RefSeq" id="WP_010866376.1">
    <property type="nucleotide sequence ID" value="NC_000854.2"/>
</dbReference>
<dbReference type="SMR" id="Q9YC03"/>
<dbReference type="STRING" id="272557.APE_1447"/>
<dbReference type="EnsemblBacteria" id="BAA80445">
    <property type="protein sequence ID" value="BAA80445"/>
    <property type="gene ID" value="APE_1447"/>
</dbReference>
<dbReference type="GeneID" id="1446021"/>
<dbReference type="KEGG" id="ape:APE_1447"/>
<dbReference type="PATRIC" id="fig|272557.25.peg.978"/>
<dbReference type="eggNOG" id="arCOG01575">
    <property type="taxonomic scope" value="Archaea"/>
</dbReference>
<dbReference type="Proteomes" id="UP000002518">
    <property type="component" value="Chromosome"/>
</dbReference>
<dbReference type="GO" id="GO:0000177">
    <property type="term" value="C:cytoplasmic exosome (RNase complex)"/>
    <property type="evidence" value="ECO:0007669"/>
    <property type="project" value="TreeGrafter"/>
</dbReference>
<dbReference type="GO" id="GO:0000175">
    <property type="term" value="F:3'-5'-RNA exonuclease activity"/>
    <property type="evidence" value="ECO:0007669"/>
    <property type="project" value="UniProtKB-UniRule"/>
</dbReference>
<dbReference type="GO" id="GO:0003723">
    <property type="term" value="F:RNA binding"/>
    <property type="evidence" value="ECO:0007669"/>
    <property type="project" value="TreeGrafter"/>
</dbReference>
<dbReference type="GO" id="GO:0010467">
    <property type="term" value="P:gene expression"/>
    <property type="evidence" value="ECO:0007669"/>
    <property type="project" value="UniProtKB-ARBA"/>
</dbReference>
<dbReference type="GO" id="GO:0016075">
    <property type="term" value="P:rRNA catabolic process"/>
    <property type="evidence" value="ECO:0007669"/>
    <property type="project" value="TreeGrafter"/>
</dbReference>
<dbReference type="CDD" id="cd11366">
    <property type="entry name" value="RNase_PH_archRRP41"/>
    <property type="match status" value="1"/>
</dbReference>
<dbReference type="FunFam" id="3.30.230.70:FF:000004">
    <property type="entry name" value="Exosome complex component Rrp41"/>
    <property type="match status" value="1"/>
</dbReference>
<dbReference type="Gene3D" id="3.30.230.70">
    <property type="entry name" value="GHMP Kinase, N-terminal domain"/>
    <property type="match status" value="1"/>
</dbReference>
<dbReference type="HAMAP" id="MF_00591">
    <property type="entry name" value="Exosome_Rrp41"/>
    <property type="match status" value="1"/>
</dbReference>
<dbReference type="InterPro" id="IPR001247">
    <property type="entry name" value="ExoRNase_PH_dom1"/>
</dbReference>
<dbReference type="InterPro" id="IPR015847">
    <property type="entry name" value="ExoRNase_PH_dom2"/>
</dbReference>
<dbReference type="InterPro" id="IPR036345">
    <property type="entry name" value="ExoRNase_PH_dom2_sf"/>
</dbReference>
<dbReference type="InterPro" id="IPR027408">
    <property type="entry name" value="PNPase/RNase_PH_dom_sf"/>
</dbReference>
<dbReference type="InterPro" id="IPR020568">
    <property type="entry name" value="Ribosomal_Su5_D2-typ_SF"/>
</dbReference>
<dbReference type="InterPro" id="IPR050080">
    <property type="entry name" value="RNase_PH"/>
</dbReference>
<dbReference type="InterPro" id="IPR011807">
    <property type="entry name" value="Rrp41"/>
</dbReference>
<dbReference type="NCBIfam" id="TIGR02065">
    <property type="entry name" value="ECX1"/>
    <property type="match status" value="1"/>
</dbReference>
<dbReference type="PANTHER" id="PTHR11953">
    <property type="entry name" value="EXOSOME COMPLEX COMPONENT"/>
    <property type="match status" value="1"/>
</dbReference>
<dbReference type="PANTHER" id="PTHR11953:SF0">
    <property type="entry name" value="EXOSOME COMPLEX COMPONENT RRP41"/>
    <property type="match status" value="1"/>
</dbReference>
<dbReference type="Pfam" id="PF01138">
    <property type="entry name" value="RNase_PH"/>
    <property type="match status" value="1"/>
</dbReference>
<dbReference type="Pfam" id="PF03725">
    <property type="entry name" value="RNase_PH_C"/>
    <property type="match status" value="1"/>
</dbReference>
<dbReference type="SUPFAM" id="SSF55666">
    <property type="entry name" value="Ribonuclease PH domain 2-like"/>
    <property type="match status" value="1"/>
</dbReference>
<dbReference type="SUPFAM" id="SSF54211">
    <property type="entry name" value="Ribosomal protein S5 domain 2-like"/>
    <property type="match status" value="1"/>
</dbReference>
<proteinExistence type="inferred from homology"/>
<reference key="1">
    <citation type="journal article" date="1999" name="DNA Res.">
        <title>Complete genome sequence of an aerobic hyper-thermophilic crenarchaeon, Aeropyrum pernix K1.</title>
        <authorList>
            <person name="Kawarabayasi Y."/>
            <person name="Hino Y."/>
            <person name="Horikawa H."/>
            <person name="Yamazaki S."/>
            <person name="Haikawa Y."/>
            <person name="Jin-no K."/>
            <person name="Takahashi M."/>
            <person name="Sekine M."/>
            <person name="Baba S."/>
            <person name="Ankai A."/>
            <person name="Kosugi H."/>
            <person name="Hosoyama A."/>
            <person name="Fukui S."/>
            <person name="Nagai Y."/>
            <person name="Nishijima K."/>
            <person name="Nakazawa H."/>
            <person name="Takamiya M."/>
            <person name="Masuda S."/>
            <person name="Funahashi T."/>
            <person name="Tanaka T."/>
            <person name="Kudoh Y."/>
            <person name="Yamazaki J."/>
            <person name="Kushida N."/>
            <person name="Oguchi A."/>
            <person name="Aoki K."/>
            <person name="Kubota K."/>
            <person name="Nakamura Y."/>
            <person name="Nomura N."/>
            <person name="Sako Y."/>
            <person name="Kikuchi H."/>
        </authorList>
    </citation>
    <scope>NUCLEOTIDE SEQUENCE [LARGE SCALE GENOMIC DNA]</scope>
    <source>
        <strain>ATCC 700893 / DSM 11879 / JCM 9820 / NBRC 100138 / K1</strain>
    </source>
</reference>
<feature type="chain" id="PRO_0000139980" description="Exosome complex component Rrp41">
    <location>
        <begin position="1"/>
        <end position="246"/>
    </location>
</feature>
<comment type="function">
    <text evidence="1">Catalytic component of the exosome, which is a complex involved in RNA degradation. Has 3'-&gt;5' exoribonuclease activity. Can also synthesize heteromeric RNA-tails.</text>
</comment>
<comment type="subunit">
    <text evidence="1">Component of the archaeal exosome complex. Forms a hexameric ring-like arrangement composed of 3 Rrp41-Rrp42 heterodimers. The hexameric ring associates with a trimer of Rrp4 and/or Csl4 subunits.</text>
</comment>
<comment type="subcellular location">
    <subcellularLocation>
        <location evidence="1">Cytoplasm</location>
    </subcellularLocation>
</comment>
<comment type="similarity">
    <text evidence="1">Belongs to the RNase PH family. Rrp41 subfamily.</text>
</comment>